<accession>E4QJB8</accession>
<protein>
    <recommendedName>
        <fullName evidence="1">Malonyl-[acyl-carrier protein] O-methyltransferase</fullName>
        <shortName evidence="1">Malonyl-ACP O-methyltransferase</shortName>
        <ecNumber evidence="1">2.1.1.197</ecNumber>
    </recommendedName>
    <alternativeName>
        <fullName evidence="1">Biotin synthesis protein BioC</fullName>
    </alternativeName>
</protein>
<evidence type="ECO:0000255" key="1">
    <source>
        <dbReference type="HAMAP-Rule" id="MF_00835"/>
    </source>
</evidence>
<gene>
    <name evidence="1" type="primary">bioC</name>
    <name type="ordered locus">MPQ_0592</name>
</gene>
<proteinExistence type="inferred from homology"/>
<dbReference type="EC" id="2.1.1.197" evidence="1"/>
<dbReference type="EMBL" id="CP002252">
    <property type="protein sequence ID" value="ADQ83774.1"/>
    <property type="molecule type" value="Genomic_DNA"/>
</dbReference>
<dbReference type="RefSeq" id="WP_013441397.1">
    <property type="nucleotide sequence ID" value="NC_014733.1"/>
</dbReference>
<dbReference type="SMR" id="E4QJB8"/>
<dbReference type="KEGG" id="mep:MPQ_0592"/>
<dbReference type="HOGENOM" id="CLU_046586_2_1_4"/>
<dbReference type="UniPathway" id="UPA00078"/>
<dbReference type="GO" id="GO:0010340">
    <property type="term" value="F:carboxyl-O-methyltransferase activity"/>
    <property type="evidence" value="ECO:0007669"/>
    <property type="project" value="UniProtKB-UniRule"/>
</dbReference>
<dbReference type="GO" id="GO:0102130">
    <property type="term" value="F:malonyl-CoA methyltransferase activity"/>
    <property type="evidence" value="ECO:0007669"/>
    <property type="project" value="UniProtKB-EC"/>
</dbReference>
<dbReference type="GO" id="GO:0008757">
    <property type="term" value="F:S-adenosylmethionine-dependent methyltransferase activity"/>
    <property type="evidence" value="ECO:0007669"/>
    <property type="project" value="InterPro"/>
</dbReference>
<dbReference type="GO" id="GO:0009102">
    <property type="term" value="P:biotin biosynthetic process"/>
    <property type="evidence" value="ECO:0007669"/>
    <property type="project" value="UniProtKB-UniRule"/>
</dbReference>
<dbReference type="GO" id="GO:0032259">
    <property type="term" value="P:methylation"/>
    <property type="evidence" value="ECO:0007669"/>
    <property type="project" value="UniProtKB-KW"/>
</dbReference>
<dbReference type="CDD" id="cd02440">
    <property type="entry name" value="AdoMet_MTases"/>
    <property type="match status" value="1"/>
</dbReference>
<dbReference type="Gene3D" id="3.40.50.150">
    <property type="entry name" value="Vaccinia Virus protein VP39"/>
    <property type="match status" value="1"/>
</dbReference>
<dbReference type="HAMAP" id="MF_00835">
    <property type="entry name" value="BioC"/>
    <property type="match status" value="1"/>
</dbReference>
<dbReference type="InterPro" id="IPR011814">
    <property type="entry name" value="BioC"/>
</dbReference>
<dbReference type="InterPro" id="IPR050602">
    <property type="entry name" value="Malonyl-ACP_OMT"/>
</dbReference>
<dbReference type="InterPro" id="IPR013216">
    <property type="entry name" value="Methyltransf_11"/>
</dbReference>
<dbReference type="InterPro" id="IPR029063">
    <property type="entry name" value="SAM-dependent_MTases_sf"/>
</dbReference>
<dbReference type="NCBIfam" id="TIGR02072">
    <property type="entry name" value="BioC"/>
    <property type="match status" value="1"/>
</dbReference>
<dbReference type="PANTHER" id="PTHR13090">
    <property type="entry name" value="ARGININE-HYDROXYLASE NDUFAF5, MITOCHONDRIAL"/>
    <property type="match status" value="1"/>
</dbReference>
<dbReference type="PANTHER" id="PTHR13090:SF1">
    <property type="entry name" value="ARGININE-HYDROXYLASE NDUFAF5, MITOCHONDRIAL"/>
    <property type="match status" value="1"/>
</dbReference>
<dbReference type="Pfam" id="PF08241">
    <property type="entry name" value="Methyltransf_11"/>
    <property type="match status" value="1"/>
</dbReference>
<dbReference type="SUPFAM" id="SSF53335">
    <property type="entry name" value="S-adenosyl-L-methionine-dependent methyltransferases"/>
    <property type="match status" value="1"/>
</dbReference>
<name>BIOC_METS6</name>
<keyword id="KW-0093">Biotin biosynthesis</keyword>
<keyword id="KW-0489">Methyltransferase</keyword>
<keyword id="KW-0949">S-adenosyl-L-methionine</keyword>
<keyword id="KW-0808">Transferase</keyword>
<reference key="1">
    <citation type="journal article" date="2011" name="J. Bacteriol.">
        <title>Complete genome sequence of the bacterium Methylovorus sp. strain MP688, a high-level producer of pyrroloquinolone quinone.</title>
        <authorList>
            <person name="Xiong X.H."/>
            <person name="Zhi J.J."/>
            <person name="Yang L."/>
            <person name="Wang J.H."/>
            <person name="Zhao Y."/>
            <person name="Wang X."/>
            <person name="Cui Y.J."/>
            <person name="Dong F."/>
            <person name="Li M.X."/>
            <person name="Yang Y.X."/>
            <person name="Wei N."/>
            <person name="An J.J."/>
            <person name="Du B.H."/>
            <person name="Liang L."/>
            <person name="Zhang J.S."/>
            <person name="Zhou W."/>
            <person name="Cheng S.F."/>
            <person name="He T."/>
            <person name="Wang L."/>
            <person name="Chen H.P."/>
            <person name="Liu D.S."/>
            <person name="Zhang W.C."/>
        </authorList>
    </citation>
    <scope>NUCLEOTIDE SEQUENCE [LARGE SCALE GENOMIC DNA]</scope>
    <source>
        <strain>MP688</strain>
    </source>
</reference>
<feature type="chain" id="PRO_0000412512" description="Malonyl-[acyl-carrier protein] O-methyltransferase">
    <location>
        <begin position="1"/>
        <end position="296"/>
    </location>
</feature>
<comment type="function">
    <text evidence="1">Converts the free carboxyl group of a malonyl-thioester to its methyl ester by transfer of a methyl group from S-adenosyl-L-methionine (SAM). It allows to synthesize pimeloyl-ACP via the fatty acid synthetic pathway.</text>
</comment>
<comment type="catalytic activity">
    <reaction evidence="1">
        <text>malonyl-[ACP] + S-adenosyl-L-methionine = malonyl-[ACP] methyl ester + S-adenosyl-L-homocysteine</text>
        <dbReference type="Rhea" id="RHEA:17105"/>
        <dbReference type="Rhea" id="RHEA-COMP:9623"/>
        <dbReference type="Rhea" id="RHEA-COMP:9954"/>
        <dbReference type="ChEBI" id="CHEBI:57856"/>
        <dbReference type="ChEBI" id="CHEBI:59789"/>
        <dbReference type="ChEBI" id="CHEBI:78449"/>
        <dbReference type="ChEBI" id="CHEBI:78845"/>
        <dbReference type="EC" id="2.1.1.197"/>
    </reaction>
</comment>
<comment type="pathway">
    <text evidence="1">Cofactor biosynthesis; biotin biosynthesis.</text>
</comment>
<comment type="similarity">
    <text evidence="1">Belongs to the methyltransferase superfamily.</text>
</comment>
<sequence>MTADAYLIDKARVRRSFDRAAGTYDAAALLQREVRERMLERLDLVKLAPQAVLDAGCGTGHASAALSARYRQSQVISLDIAMGMLKKTMAARSLVQRLFGFDRRHAVCADIERLPLAAASIDLVWSNMAIQWCNDLDQAFGEIQRVLKPEGLLMFSTLGPDTLKELRAATRQDNTHVTVSRFIDMHDIGDALVRAGFNAPVLDVEYFELTYDDVMGVMRDLKAIGAHNAAEGRHRGLQGRGFLQQVQARYESFRRDGKLPATYEVIYGHAWKPQARVALPDGLSPVQFRPRASSST</sequence>
<organism>
    <name type="scientific">Methylovorus sp. (strain MP688)</name>
    <dbReference type="NCBI Taxonomy" id="887061"/>
    <lineage>
        <taxon>Bacteria</taxon>
        <taxon>Pseudomonadati</taxon>
        <taxon>Pseudomonadota</taxon>
        <taxon>Betaproteobacteria</taxon>
        <taxon>Nitrosomonadales</taxon>
        <taxon>Methylophilaceae</taxon>
        <taxon>Methylovorus</taxon>
    </lineage>
</organism>